<proteinExistence type="evidence at protein level"/>
<sequence>MSSETGPVAVDPTLRRRIEPHEFEVFFDPRELRKETCLLYEINWGGRHSVWRHTSQNTSNHVEVNFLEKFTTERYFRPNTRCSITWFLSWSPCGECSRAITEFLSRHPYVTLFIYIARLYHHTDQRNRQGLRDLISSGVTIQIMTEQEYCYCWRNFVNYPPSNEAYWPRYPHLWVKLYVLELYCIILGLPPCLKILRRKQPQLTFFTITLQTCHYQRIPPHLLWATGLK</sequence>
<feature type="chain" id="PRO_0000171745" description="C-&gt;U-editing enzyme APOBEC-1">
    <location>
        <begin position="1"/>
        <end position="229"/>
    </location>
</feature>
<feature type="domain" description="CMP/dCMP-type deaminase" evidence="3">
    <location>
        <begin position="10"/>
        <end position="134"/>
    </location>
</feature>
<feature type="active site" description="Proton donor" evidence="2">
    <location>
        <position position="63"/>
    </location>
</feature>
<feature type="binding site" evidence="2">
    <location>
        <position position="61"/>
    </location>
    <ligand>
        <name>Zn(2+)</name>
        <dbReference type="ChEBI" id="CHEBI:29105"/>
        <note>catalytic</note>
    </ligand>
</feature>
<feature type="binding site" evidence="2">
    <location>
        <position position="93"/>
    </location>
    <ligand>
        <name>Zn(2+)</name>
        <dbReference type="ChEBI" id="CHEBI:29105"/>
        <note>catalytic</note>
    </ligand>
</feature>
<feature type="binding site" evidence="2">
    <location>
        <position position="96"/>
    </location>
    <ligand>
        <name>Zn(2+)</name>
        <dbReference type="ChEBI" id="CHEBI:29105"/>
        <note>catalytic</note>
    </ligand>
</feature>
<feature type="sequence conflict" description="In Ref. 2; AAH03792." evidence="6" ref="2">
    <original>R</original>
    <variation>Q</variation>
    <location>
        <position position="106"/>
    </location>
</feature>
<comment type="function">
    <text evidence="1 5">Cytidine deaminase catalyzing the cytidine to uridine postranscriptional editing of a variety of mRNAs. Form complexes with cofactors that confer differential editing activity and selectivity. Responsible for the postranscriptional editing of a CAA codon for Gln to a UAA codon for stop in the apolipoprotein B mRNA. Also involved in CGA (Arg) to UGA (Stop) editing in the NF1 mRNA (By similarity). May also play a role in the epigenetic regulation of gene expression by participating in DNA demethylation (PubMed:21496894).</text>
</comment>
<comment type="catalytic activity">
    <reaction evidence="1">
        <text>a cytidine in mRNA + H2O + H(+) = a uridine in mRNA + NH4(+)</text>
        <dbReference type="Rhea" id="RHEA:74355"/>
        <dbReference type="Rhea" id="RHEA-COMP:14658"/>
        <dbReference type="Rhea" id="RHEA-COMP:15145"/>
        <dbReference type="ChEBI" id="CHEBI:15377"/>
        <dbReference type="ChEBI" id="CHEBI:15378"/>
        <dbReference type="ChEBI" id="CHEBI:28938"/>
        <dbReference type="ChEBI" id="CHEBI:65315"/>
        <dbReference type="ChEBI" id="CHEBI:82748"/>
    </reaction>
    <physiologicalReaction direction="left-to-right" evidence="1">
        <dbReference type="Rhea" id="RHEA:74356"/>
    </physiologicalReaction>
</comment>
<comment type="catalytic activity">
    <reaction evidence="1">
        <text>cytidine(6666) in apoB mRNA + H2O + H(+) = uridine(6666) in apoB mRNA + NH4(+)</text>
        <dbReference type="Rhea" id="RHEA:21772"/>
        <dbReference type="Rhea" id="RHEA-COMP:13888"/>
        <dbReference type="Rhea" id="RHEA-COMP:13889"/>
        <dbReference type="ChEBI" id="CHEBI:15377"/>
        <dbReference type="ChEBI" id="CHEBI:15378"/>
        <dbReference type="ChEBI" id="CHEBI:28938"/>
        <dbReference type="ChEBI" id="CHEBI:65315"/>
        <dbReference type="ChEBI" id="CHEBI:82748"/>
        <dbReference type="EC" id="3.5.4.36"/>
    </reaction>
    <physiologicalReaction direction="left-to-right" evidence="1">
        <dbReference type="Rhea" id="RHEA:21773"/>
    </physiologicalReaction>
</comment>
<comment type="cofactor">
    <cofactor evidence="2">
        <name>Zn(2+)</name>
        <dbReference type="ChEBI" id="CHEBI:29105"/>
    </cofactor>
    <text evidence="2">Binds 1 Zn(2+) ion per subunit.</text>
</comment>
<comment type="subunit">
    <text evidence="1">Homodimer. Interacts with A1CF; form an mRNA editing complex. Interacts with RBM47; form an mRNA editing complex. Found in a complex with CELF2/CUGBP2 and A1CF. Interacts with HNRPAB. Interacts with SYNCRIP.</text>
</comment>
<comment type="subcellular location">
    <subcellularLocation>
        <location evidence="1">Cytoplasm</location>
    </subcellularLocation>
    <subcellularLocation>
        <location evidence="1">Nucleus</location>
    </subcellularLocation>
</comment>
<comment type="tissue specificity">
    <text evidence="4">Expressed in the spleen. Expressed at lower level in the kidney, testis, lung, brain and liver.</text>
</comment>
<comment type="similarity">
    <text evidence="6">Belongs to the cytidine and deoxycytidylate deaminase family.</text>
</comment>
<accession>P51908</accession>
<accession>Q99L67</accession>
<evidence type="ECO:0000250" key="1">
    <source>
        <dbReference type="UniProtKB" id="P41238"/>
    </source>
</evidence>
<evidence type="ECO:0000250" key="2">
    <source>
        <dbReference type="UniProtKB" id="Q9Y235"/>
    </source>
</evidence>
<evidence type="ECO:0000255" key="3">
    <source>
        <dbReference type="PROSITE-ProRule" id="PRU01083"/>
    </source>
</evidence>
<evidence type="ECO:0000269" key="4">
    <source>
    </source>
</evidence>
<evidence type="ECO:0000269" key="5">
    <source>
    </source>
</evidence>
<evidence type="ECO:0000305" key="6"/>
<evidence type="ECO:0000312" key="7">
    <source>
        <dbReference type="MGI" id="MGI:103298"/>
    </source>
</evidence>
<organism>
    <name type="scientific">Mus musculus</name>
    <name type="common">Mouse</name>
    <dbReference type="NCBI Taxonomy" id="10090"/>
    <lineage>
        <taxon>Eukaryota</taxon>
        <taxon>Metazoa</taxon>
        <taxon>Chordata</taxon>
        <taxon>Craniata</taxon>
        <taxon>Vertebrata</taxon>
        <taxon>Euteleostomi</taxon>
        <taxon>Mammalia</taxon>
        <taxon>Eutheria</taxon>
        <taxon>Euarchontoglires</taxon>
        <taxon>Glires</taxon>
        <taxon>Rodentia</taxon>
        <taxon>Myomorpha</taxon>
        <taxon>Muroidea</taxon>
        <taxon>Muridae</taxon>
        <taxon>Murinae</taxon>
        <taxon>Mus</taxon>
        <taxon>Mus</taxon>
    </lineage>
</organism>
<dbReference type="EC" id="3.5.4.-" evidence="1"/>
<dbReference type="EC" id="3.5.4.36" evidence="1"/>
<dbReference type="EMBL" id="U21951">
    <property type="protein sequence ID" value="AAC52211.1"/>
    <property type="molecule type" value="Genomic_DNA"/>
</dbReference>
<dbReference type="EMBL" id="U21947">
    <property type="protein sequence ID" value="AAC52211.1"/>
    <property type="status" value="JOINED"/>
    <property type="molecule type" value="Genomic_DNA"/>
</dbReference>
<dbReference type="EMBL" id="U21948">
    <property type="protein sequence ID" value="AAC52211.1"/>
    <property type="status" value="JOINED"/>
    <property type="molecule type" value="Genomic_DNA"/>
</dbReference>
<dbReference type="EMBL" id="U21949">
    <property type="protein sequence ID" value="AAC52211.1"/>
    <property type="status" value="JOINED"/>
    <property type="molecule type" value="Genomic_DNA"/>
</dbReference>
<dbReference type="EMBL" id="U21950">
    <property type="protein sequence ID" value="AAC52211.1"/>
    <property type="status" value="JOINED"/>
    <property type="molecule type" value="Genomic_DNA"/>
</dbReference>
<dbReference type="EMBL" id="U22262">
    <property type="protein sequence ID" value="AAC52212.1"/>
    <property type="molecule type" value="mRNA"/>
</dbReference>
<dbReference type="EMBL" id="U22263">
    <property type="protein sequence ID" value="AAC52213.1"/>
    <property type="molecule type" value="mRNA"/>
</dbReference>
<dbReference type="EMBL" id="U22264">
    <property type="protein sequence ID" value="AAC52214.1"/>
    <property type="molecule type" value="mRNA"/>
</dbReference>
<dbReference type="EMBL" id="BC003792">
    <property type="protein sequence ID" value="AAH03792.1"/>
    <property type="molecule type" value="mRNA"/>
</dbReference>
<dbReference type="CCDS" id="CCDS20498.1"/>
<dbReference type="PIR" id="I48249">
    <property type="entry name" value="I48249"/>
</dbReference>
<dbReference type="RefSeq" id="NP_001127863.1">
    <property type="nucleotide sequence ID" value="NM_001134391.2"/>
</dbReference>
<dbReference type="RefSeq" id="NP_001396396.1">
    <property type="nucleotide sequence ID" value="NM_001409467.1"/>
</dbReference>
<dbReference type="RefSeq" id="NP_001396397.1">
    <property type="nucleotide sequence ID" value="NM_001409468.1"/>
</dbReference>
<dbReference type="RefSeq" id="NP_001396398.1">
    <property type="nucleotide sequence ID" value="NM_001409469.1"/>
</dbReference>
<dbReference type="RefSeq" id="NP_001396399.1">
    <property type="nucleotide sequence ID" value="NM_001409470.1"/>
</dbReference>
<dbReference type="RefSeq" id="NP_112436.1">
    <property type="nucleotide sequence ID" value="NM_031159.4"/>
</dbReference>
<dbReference type="RefSeq" id="XP_006505464.1">
    <property type="nucleotide sequence ID" value="XM_006505401.2"/>
</dbReference>
<dbReference type="RefSeq" id="XP_011239461.1">
    <property type="nucleotide sequence ID" value="XM_011241159.2"/>
</dbReference>
<dbReference type="SMR" id="P51908"/>
<dbReference type="BioGRID" id="198158">
    <property type="interactions" value="3"/>
</dbReference>
<dbReference type="ComplexPortal" id="CPX-1098">
    <property type="entry name" value="C-to-U editosome complex"/>
</dbReference>
<dbReference type="FunCoup" id="P51908">
    <property type="interactions" value="126"/>
</dbReference>
<dbReference type="STRING" id="10090.ENSMUSP00000108205"/>
<dbReference type="iPTMnet" id="P51908"/>
<dbReference type="PhosphoSitePlus" id="P51908"/>
<dbReference type="PaxDb" id="10090-ENSMUSP00000108205"/>
<dbReference type="PeptideAtlas" id="P51908"/>
<dbReference type="ProteomicsDB" id="285746"/>
<dbReference type="Antibodypedia" id="22955">
    <property type="antibodies" value="161 antibodies from 26 providers"/>
</dbReference>
<dbReference type="DNASU" id="11810"/>
<dbReference type="Ensembl" id="ENSMUST00000112585.8">
    <property type="protein sequence ID" value="ENSMUSP00000108204.2"/>
    <property type="gene ID" value="ENSMUSG00000040613.15"/>
</dbReference>
<dbReference type="Ensembl" id="ENSMUST00000112586.8">
    <property type="protein sequence ID" value="ENSMUSP00000108205.2"/>
    <property type="gene ID" value="ENSMUSG00000040613.15"/>
</dbReference>
<dbReference type="Ensembl" id="ENSMUST00000112587.11">
    <property type="protein sequence ID" value="ENSMUSP00000108206.5"/>
    <property type="gene ID" value="ENSMUSG00000040613.15"/>
</dbReference>
<dbReference type="GeneID" id="11810"/>
<dbReference type="KEGG" id="mmu:11810"/>
<dbReference type="UCSC" id="uc009dpk.1">
    <property type="organism name" value="mouse"/>
</dbReference>
<dbReference type="AGR" id="MGI:103298"/>
<dbReference type="CTD" id="339"/>
<dbReference type="MGI" id="MGI:103298">
    <property type="gene designation" value="Apobec1"/>
</dbReference>
<dbReference type="VEuPathDB" id="HostDB:ENSMUSG00000040613"/>
<dbReference type="eggNOG" id="ENOG502SNW2">
    <property type="taxonomic scope" value="Eukaryota"/>
</dbReference>
<dbReference type="GeneTree" id="ENSGT00940000161190"/>
<dbReference type="HOGENOM" id="CLU_080056_3_0_1"/>
<dbReference type="InParanoid" id="P51908"/>
<dbReference type="OMA" id="LTLQNCH"/>
<dbReference type="OrthoDB" id="5956704at2759"/>
<dbReference type="PhylomeDB" id="P51908"/>
<dbReference type="TreeFam" id="TF331356"/>
<dbReference type="BRENDA" id="3.5.4.1">
    <property type="organism ID" value="3474"/>
</dbReference>
<dbReference type="BRENDA" id="3.5.4.36">
    <property type="organism ID" value="3474"/>
</dbReference>
<dbReference type="Reactome" id="R-MMU-72200">
    <property type="pathway name" value="mRNA Editing: C to U Conversion"/>
</dbReference>
<dbReference type="Reactome" id="R-MMU-75094">
    <property type="pathway name" value="Formation of the Editosome"/>
</dbReference>
<dbReference type="BioGRID-ORCS" id="11810">
    <property type="hits" value="0 hits in 118 CRISPR screens"/>
</dbReference>
<dbReference type="ChiTaRS" id="Apobec1">
    <property type="organism name" value="mouse"/>
</dbReference>
<dbReference type="PRO" id="PR:P51908"/>
<dbReference type="Proteomes" id="UP000000589">
    <property type="component" value="Chromosome 6"/>
</dbReference>
<dbReference type="RNAct" id="P51908">
    <property type="molecule type" value="protein"/>
</dbReference>
<dbReference type="Bgee" id="ENSMUSG00000040613">
    <property type="expression patterns" value="Expressed in granulocyte and 150 other cell types or tissues"/>
</dbReference>
<dbReference type="ExpressionAtlas" id="P51908">
    <property type="expression patterns" value="baseline and differential"/>
</dbReference>
<dbReference type="GO" id="GO:0030895">
    <property type="term" value="C:apolipoprotein B mRNA editing enzyme complex"/>
    <property type="evidence" value="ECO:0007669"/>
    <property type="project" value="Ensembl"/>
</dbReference>
<dbReference type="GO" id="GO:0005737">
    <property type="term" value="C:cytoplasm"/>
    <property type="evidence" value="ECO:0000250"/>
    <property type="project" value="UniProtKB"/>
</dbReference>
<dbReference type="GO" id="GO:0045293">
    <property type="term" value="C:mRNA editing complex"/>
    <property type="evidence" value="ECO:0000303"/>
    <property type="project" value="ComplexPortal"/>
</dbReference>
<dbReference type="GO" id="GO:0005634">
    <property type="term" value="C:nucleus"/>
    <property type="evidence" value="ECO:0000266"/>
    <property type="project" value="ComplexPortal"/>
</dbReference>
<dbReference type="GO" id="GO:0004126">
    <property type="term" value="F:cytidine deaminase activity"/>
    <property type="evidence" value="ECO:0000266"/>
    <property type="project" value="MGI"/>
</dbReference>
<dbReference type="GO" id="GO:0035925">
    <property type="term" value="F:mRNA 3'-UTR AU-rich region binding"/>
    <property type="evidence" value="ECO:0000314"/>
    <property type="project" value="MGI"/>
</dbReference>
<dbReference type="GO" id="GO:0008270">
    <property type="term" value="F:zinc ion binding"/>
    <property type="evidence" value="ECO:0007669"/>
    <property type="project" value="InterPro"/>
</dbReference>
<dbReference type="GO" id="GO:0141166">
    <property type="term" value="P:chromosomal 5-methylcytosine DNA demethylation pathway"/>
    <property type="evidence" value="ECO:0000303"/>
    <property type="project" value="ComplexPortal"/>
</dbReference>
<dbReference type="GO" id="GO:0016554">
    <property type="term" value="P:cytidine to uridine editing"/>
    <property type="evidence" value="ECO:0000314"/>
    <property type="project" value="UniProtKB"/>
</dbReference>
<dbReference type="GO" id="GO:0051649">
    <property type="term" value="P:establishment of localization in cell"/>
    <property type="evidence" value="ECO:0000316"/>
    <property type="project" value="MGI"/>
</dbReference>
<dbReference type="GO" id="GO:0042158">
    <property type="term" value="P:lipoprotein biosynthetic process"/>
    <property type="evidence" value="ECO:0000316"/>
    <property type="project" value="MGI"/>
</dbReference>
<dbReference type="GO" id="GO:0042157">
    <property type="term" value="P:lipoprotein metabolic process"/>
    <property type="evidence" value="ECO:0000315"/>
    <property type="project" value="MGI"/>
</dbReference>
<dbReference type="GO" id="GO:0042953">
    <property type="term" value="P:lipoprotein transport"/>
    <property type="evidence" value="ECO:0000316"/>
    <property type="project" value="MGI"/>
</dbReference>
<dbReference type="GO" id="GO:0016556">
    <property type="term" value="P:mRNA modification"/>
    <property type="evidence" value="ECO:0000314"/>
    <property type="project" value="MGI"/>
</dbReference>
<dbReference type="GO" id="GO:0006397">
    <property type="term" value="P:mRNA processing"/>
    <property type="evidence" value="ECO:0007669"/>
    <property type="project" value="UniProtKB-KW"/>
</dbReference>
<dbReference type="GO" id="GO:0048255">
    <property type="term" value="P:mRNA stabilization"/>
    <property type="evidence" value="ECO:0000314"/>
    <property type="project" value="MGI"/>
</dbReference>
<dbReference type="GO" id="GO:2000623">
    <property type="term" value="P:negative regulation of nuclear-transcribed mRNA catabolic process, nonsense-mediated decay"/>
    <property type="evidence" value="ECO:0000266"/>
    <property type="project" value="ComplexPortal"/>
</dbReference>
<dbReference type="GO" id="GO:0090209">
    <property type="term" value="P:negative regulation of triglyceride metabolic process"/>
    <property type="evidence" value="ECO:0000316"/>
    <property type="project" value="MGI"/>
</dbReference>
<dbReference type="GO" id="GO:0044029">
    <property type="term" value="P:positive regulation of gene expression via chromosomal CpG island demethylation"/>
    <property type="evidence" value="ECO:0000314"/>
    <property type="project" value="UniProtKB"/>
</dbReference>
<dbReference type="GO" id="GO:0042127">
    <property type="term" value="P:regulation of cell population proliferation"/>
    <property type="evidence" value="ECO:0000316"/>
    <property type="project" value="MGI"/>
</dbReference>
<dbReference type="GO" id="GO:0010332">
    <property type="term" value="P:response to gamma radiation"/>
    <property type="evidence" value="ECO:0000315"/>
    <property type="project" value="MGI"/>
</dbReference>
<dbReference type="GO" id="GO:0006641">
    <property type="term" value="P:triglyceride metabolic process"/>
    <property type="evidence" value="ECO:0000316"/>
    <property type="project" value="MGI"/>
</dbReference>
<dbReference type="CDD" id="cd01283">
    <property type="entry name" value="cytidine_deaminase"/>
    <property type="match status" value="1"/>
</dbReference>
<dbReference type="FunFam" id="3.40.140.10:FF:000049">
    <property type="entry name" value="C-&gt;U-editing enzyme APOBEC-1 isoform X2"/>
    <property type="match status" value="1"/>
</dbReference>
<dbReference type="Gene3D" id="3.40.140.10">
    <property type="entry name" value="Cytidine Deaminase, domain 2"/>
    <property type="match status" value="1"/>
</dbReference>
<dbReference type="InterPro" id="IPR016192">
    <property type="entry name" value="APOBEC/CMP_deaminase_Zn-bd"/>
</dbReference>
<dbReference type="InterPro" id="IPR041547">
    <property type="entry name" value="APOBEC1"/>
</dbReference>
<dbReference type="InterPro" id="IPR050610">
    <property type="entry name" value="APOBEC_Cyt_Deaminase"/>
</dbReference>
<dbReference type="InterPro" id="IPR002125">
    <property type="entry name" value="CMP_dCMP_dom"/>
</dbReference>
<dbReference type="InterPro" id="IPR016193">
    <property type="entry name" value="Cytidine_deaminase-like"/>
</dbReference>
<dbReference type="PANTHER" id="PTHR13857:SF26">
    <property type="entry name" value="C-U-EDITING ENZYME APOBEC-1"/>
    <property type="match status" value="1"/>
</dbReference>
<dbReference type="PANTHER" id="PTHR13857">
    <property type="entry name" value="MRNA EDITING ENZYME"/>
    <property type="match status" value="1"/>
</dbReference>
<dbReference type="Pfam" id="PF18774">
    <property type="entry name" value="APOBEC4_like"/>
    <property type="match status" value="1"/>
</dbReference>
<dbReference type="SUPFAM" id="SSF53927">
    <property type="entry name" value="Cytidine deaminase-like"/>
    <property type="match status" value="1"/>
</dbReference>
<dbReference type="PROSITE" id="PS00903">
    <property type="entry name" value="CYT_DCMP_DEAMINASES_1"/>
    <property type="match status" value="1"/>
</dbReference>
<dbReference type="PROSITE" id="PS51747">
    <property type="entry name" value="CYT_DCMP_DEAMINASES_2"/>
    <property type="match status" value="1"/>
</dbReference>
<reference key="1">
    <citation type="journal article" date="1995" name="J. Biol. Chem.">
        <title>Alternative mRNA splicing and differential promoter utilization determine tissue-specific expression of the apolipoprotein B mRNA-editing protein (Apobec1) gene in mice. Structure and evolution of Apobec1 and related nucleoside/nucleotide deaminases.</title>
        <authorList>
            <person name="Nakamuta M."/>
            <person name="Oka K."/>
            <person name="Krushkal J."/>
            <person name="Kobayashi K."/>
            <person name="Yamamoto M."/>
            <person name="Li W.H."/>
            <person name="Chan L."/>
        </authorList>
    </citation>
    <scope>NUCLEOTIDE SEQUENCE [GENOMIC DNA / MRNA]</scope>
    <source>
        <tissue>Small intestine</tissue>
    </source>
</reference>
<reference key="2">
    <citation type="journal article" date="2004" name="Genome Res.">
        <title>The status, quality, and expansion of the NIH full-length cDNA project: the Mammalian Gene Collection (MGC).</title>
        <authorList>
            <consortium name="The MGC Project Team"/>
        </authorList>
    </citation>
    <scope>NUCLEOTIDE SEQUENCE [LARGE SCALE MRNA]</scope>
</reference>
<reference key="3">
    <citation type="journal article" date="2003" name="Cell">
        <title>Species-specific exclusion of APOBEC3G from HIV-1 virions by Vif.</title>
        <authorList>
            <person name="Mariani R."/>
            <person name="Chen D."/>
            <person name="Schroefelbauer B."/>
            <person name="Navarro F."/>
            <person name="Koenig R."/>
            <person name="Bollman B."/>
            <person name="Muenk C."/>
            <person name="Nymark-McMahon H."/>
            <person name="Landau N.R."/>
        </authorList>
    </citation>
    <scope>TISSUE SPECIFICITY</scope>
</reference>
<reference key="4">
    <citation type="journal article" date="2011" name="Cell">
        <title>Hydroxylation of 5-methylcytosine by TET1 promotes active DNA demethylation in the adult brain.</title>
        <authorList>
            <person name="Guo J.U."/>
            <person name="Su Y."/>
            <person name="Zhong C."/>
            <person name="Ming G.L."/>
            <person name="Song H."/>
        </authorList>
    </citation>
    <scope>FUNCTION IN DNA DEMETHYLATION</scope>
</reference>
<gene>
    <name evidence="7" type="primary">Apobec1</name>
</gene>
<name>ABEC1_MOUSE</name>
<protein>
    <recommendedName>
        <fullName evidence="6">C-&gt;U-editing enzyme APOBEC-1</fullName>
        <ecNumber evidence="1">3.5.4.-</ecNumber>
    </recommendedName>
    <alternativeName>
        <fullName evidence="7">Apolipoprotein B mRNA-editing enzyme catalytic polypeptide 1</fullName>
        <shortName evidence="1">APOBEC-1</shortName>
        <shortName>Apolipoprotein B mRNA-editing enzyme 1</shortName>
        <ecNumber evidence="1">3.5.4.36</ecNumber>
    </alternativeName>
    <alternativeName>
        <fullName evidence="1">mRNA(cytosine(6666)) deaminase 1</fullName>
    </alternativeName>
</protein>
<keyword id="KW-0963">Cytoplasm</keyword>
<keyword id="KW-0378">Hydrolase</keyword>
<keyword id="KW-0479">Metal-binding</keyword>
<keyword id="KW-0507">mRNA processing</keyword>
<keyword id="KW-0539">Nucleus</keyword>
<keyword id="KW-1185">Reference proteome</keyword>
<keyword id="KW-0862">Zinc</keyword>